<reference key="1">
    <citation type="journal article" date="2004" name="Genome Res.">
        <title>The status, quality, and expansion of the NIH full-length cDNA project: the Mammalian Gene Collection (MGC).</title>
        <authorList>
            <consortium name="The MGC Project Team"/>
        </authorList>
    </citation>
    <scope>NUCLEOTIDE SEQUENCE [LARGE SCALE MRNA]</scope>
    <source>
        <tissue>Testis</tissue>
    </source>
</reference>
<proteinExistence type="evidence at transcript level"/>
<keyword id="KW-1003">Cell membrane</keyword>
<keyword id="KW-0963">Cytoplasm</keyword>
<keyword id="KW-0449">Lipoprotein</keyword>
<keyword id="KW-0472">Membrane</keyword>
<keyword id="KW-0519">Myristate</keyword>
<keyword id="KW-0539">Nucleus</keyword>
<keyword id="KW-1185">Reference proteome</keyword>
<organism>
    <name type="scientific">Rattus norvegicus</name>
    <name type="common">Rat</name>
    <dbReference type="NCBI Taxonomy" id="10116"/>
    <lineage>
        <taxon>Eukaryota</taxon>
        <taxon>Metazoa</taxon>
        <taxon>Chordata</taxon>
        <taxon>Craniata</taxon>
        <taxon>Vertebrata</taxon>
        <taxon>Euteleostomi</taxon>
        <taxon>Mammalia</taxon>
        <taxon>Eutheria</taxon>
        <taxon>Euarchontoglires</taxon>
        <taxon>Glires</taxon>
        <taxon>Rodentia</taxon>
        <taxon>Myomorpha</taxon>
        <taxon>Muroidea</taxon>
        <taxon>Muridae</taxon>
        <taxon>Murinae</taxon>
        <taxon>Rattus</taxon>
    </lineage>
</organism>
<feature type="initiator methionine" description="Removed" evidence="2">
    <location>
        <position position="1"/>
    </location>
</feature>
<feature type="chain" id="PRO_0000320051" description="DCN1-like protein 3">
    <location>
        <begin position="2"/>
        <end position="304"/>
    </location>
</feature>
<feature type="domain" description="DCUN1" evidence="3">
    <location>
        <begin position="86"/>
        <end position="278"/>
    </location>
</feature>
<feature type="region of interest" description="Disordered" evidence="4">
    <location>
        <begin position="1"/>
        <end position="87"/>
    </location>
</feature>
<feature type="region of interest" description="Disordered" evidence="4">
    <location>
        <begin position="285"/>
        <end position="304"/>
    </location>
</feature>
<feature type="lipid moiety-binding region" description="N-myristoyl glycine" evidence="1 2">
    <location>
        <position position="2"/>
    </location>
</feature>
<name>DCNL3_RAT</name>
<gene>
    <name evidence="6" type="primary">Dcun1d3</name>
</gene>
<protein>
    <recommendedName>
        <fullName evidence="5">DCN1-like protein 3</fullName>
        <shortName evidence="1">DCNL3</shortName>
    </recommendedName>
    <alternativeName>
        <fullName>DCUN1 domain-containing protein 3</fullName>
    </alternativeName>
    <alternativeName>
        <fullName>Defective in cullin neddylation protein 1-like protein 3</fullName>
    </alternativeName>
</protein>
<accession>Q4V8B2</accession>
<evidence type="ECO:0000250" key="1">
    <source>
        <dbReference type="UniProtKB" id="Q8IWE4"/>
    </source>
</evidence>
<evidence type="ECO:0000255" key="2"/>
<evidence type="ECO:0000255" key="3">
    <source>
        <dbReference type="PROSITE-ProRule" id="PRU00574"/>
    </source>
</evidence>
<evidence type="ECO:0000256" key="4">
    <source>
        <dbReference type="SAM" id="MobiDB-lite"/>
    </source>
</evidence>
<evidence type="ECO:0000305" key="5"/>
<evidence type="ECO:0000312" key="6">
    <source>
        <dbReference type="RGD" id="1308893"/>
    </source>
</evidence>
<sequence>MGQCVTKCKNPSSTLGSKNGDRDPSSKSHSRRGASHREEQVPPCGKPAGDILVNGTKKAEAATEACQLPTSSGDAGRESKTNAEESSLQRLEELFRRYKDEREDAILEEGMERFCNDLCVDPTEFRVLLLAWKFQAATMCKFTRKEFFDGCKAISADSIDGICARFPSLLTEAKQEDKFKDLYRFTFQFGLDSEEGQRSLHREIAIALWKLVFTQNNPPVLDQWLNFLTENPSGIKGISRDTWNMFLNFTQVIGPDLSNYSEDEAWPSLFDTFVEWEMERRKREVEGRGALSSGPEGLCPEEQT</sequence>
<comment type="function">
    <text evidence="1">Contributes to the neddylation of all cullins by transferring NEDD8 from N-terminally acetylated NEDD8-conjugating E2s enzyme to different cullin C-terminal domain-RBX complexes and may play a role in the cell cycle progression by regulating the SCF ubiquitin E3 ligase complex, after UV damage. At the cell membrane, can promote and as well inhibit cullins neddylation.</text>
</comment>
<comment type="subunit">
    <text evidence="1">Part of a complex containing DCUN1D3, CUL3 and RBX1. Interacts (via the DCUN1 domain) with the unneddylated cullins: interacts with CUL1, CUL2, CUL3, CUL4A, CUL4B and CUL5; these interactions promote the cullin neddylation and the identity of the cullin dictates the affinity of the interaction. Interacts preferentially with CUL3; this interaction triggers the relocalization of CUL3 to the cell membrane where CUL3 is neddylated. Interacts (via DCUN1 domain) with RBX1. May also interact with regulators or subunits of cullin-RING ligases such as RNF7, ELOB and DDB1; these interactions are bridged by cullins. Interacts (via DCUN1 domain) with CAND1; this interaction is bridged by cullins and strongly inhibits cullin neddylation. These CAND-cullin-DCNL complexes can only be neddylated in the presence of a substrate adapter. Interacts (via DCUN1 domain) with the N-terminally acetylated form of UBE2M and UBE2F.</text>
</comment>
<comment type="subcellular location">
    <subcellularLocation>
        <location evidence="1">Cell membrane</location>
    </subcellularLocation>
    <subcellularLocation>
        <location evidence="1">Cytoplasm</location>
    </subcellularLocation>
    <subcellularLocation>
        <location evidence="1">Nucleus</location>
    </subcellularLocation>
    <subcellularLocation>
        <location evidence="1">Cytoplasm</location>
        <location evidence="1">Perinuclear region</location>
    </subcellularLocation>
    <text evidence="1">After UVC treatment, the protein enters to the nucleus gradually. Cell membrane localization is essential for CUL3 neddylation.</text>
</comment>
<comment type="domain">
    <text evidence="1">The DCUN1 domain, also known as PONY domain, mediates the interaction with different cullins. The DCUN1 domain mediates the interaction with the N-terminally acetylated NEDD8-conjugating E2s enzyme leading to the NEDD8 transfer from N-terminally acetylated NEDD8-conjugating E2s enzyme to different cullin C-terminal domain-RBX complexes; the neddylation efficiency correlates with the DCUN1D5-cullin and DCUN1D5-E2 interaction affinities. This domain is also involved in CAND1-, cullins- and RBX1-binding.</text>
</comment>
<dbReference type="EMBL" id="BC097462">
    <property type="protein sequence ID" value="AAH97462.1"/>
    <property type="molecule type" value="mRNA"/>
</dbReference>
<dbReference type="RefSeq" id="NP_001020057.1">
    <property type="nucleotide sequence ID" value="NM_001024886.1"/>
</dbReference>
<dbReference type="RefSeq" id="XP_008757972.1">
    <property type="nucleotide sequence ID" value="XM_008759750.4"/>
</dbReference>
<dbReference type="RefSeq" id="XP_038934549.1">
    <property type="nucleotide sequence ID" value="XM_039078621.2"/>
</dbReference>
<dbReference type="RefSeq" id="XP_038934556.1">
    <property type="nucleotide sequence ID" value="XM_039078628.2"/>
</dbReference>
<dbReference type="RefSeq" id="XP_063119704.1">
    <property type="nucleotide sequence ID" value="XM_063263634.1"/>
</dbReference>
<dbReference type="RefSeq" id="XP_063119709.1">
    <property type="nucleotide sequence ID" value="XM_063263639.1"/>
</dbReference>
<dbReference type="SMR" id="Q4V8B2"/>
<dbReference type="FunCoup" id="Q4V8B2">
    <property type="interactions" value="1677"/>
</dbReference>
<dbReference type="STRING" id="10116.ENSRNOP00000019167"/>
<dbReference type="PhosphoSitePlus" id="Q4V8B2"/>
<dbReference type="SwissPalm" id="Q4V8B2"/>
<dbReference type="PaxDb" id="10116-ENSRNOP00000019167"/>
<dbReference type="Ensembl" id="ENSRNOT00000120052.1">
    <property type="protein sequence ID" value="ENSRNOP00000078076.1"/>
    <property type="gene ID" value="ENSRNOG00000066875.1"/>
</dbReference>
<dbReference type="GeneID" id="309035"/>
<dbReference type="KEGG" id="rno:309035"/>
<dbReference type="UCSC" id="RGD:1308893">
    <property type="organism name" value="rat"/>
</dbReference>
<dbReference type="AGR" id="RGD:1308893"/>
<dbReference type="CTD" id="123879"/>
<dbReference type="RGD" id="1308893">
    <property type="gene designation" value="Dcun1d3"/>
</dbReference>
<dbReference type="eggNOG" id="KOG3077">
    <property type="taxonomic scope" value="Eukaryota"/>
</dbReference>
<dbReference type="GeneTree" id="ENSGT00940000154944"/>
<dbReference type="HOGENOM" id="CLU_047042_2_0_1"/>
<dbReference type="InParanoid" id="Q4V8B2"/>
<dbReference type="OMA" id="DQMNQNI"/>
<dbReference type="OrthoDB" id="27198at2759"/>
<dbReference type="PhylomeDB" id="Q4V8B2"/>
<dbReference type="TreeFam" id="TF313332"/>
<dbReference type="Reactome" id="R-RNO-8951664">
    <property type="pathway name" value="Neddylation"/>
</dbReference>
<dbReference type="PRO" id="PR:Q4V8B2"/>
<dbReference type="Proteomes" id="UP000002494">
    <property type="component" value="Chromosome 1"/>
</dbReference>
<dbReference type="Bgee" id="ENSRNOG00000014037">
    <property type="expression patterns" value="Expressed in testis and 18 other cell types or tissues"/>
</dbReference>
<dbReference type="GO" id="GO:0005737">
    <property type="term" value="C:cytoplasm"/>
    <property type="evidence" value="ECO:0000250"/>
    <property type="project" value="UniProtKB"/>
</dbReference>
<dbReference type="GO" id="GO:0005634">
    <property type="term" value="C:nucleus"/>
    <property type="evidence" value="ECO:0000250"/>
    <property type="project" value="UniProtKB"/>
</dbReference>
<dbReference type="GO" id="GO:0048471">
    <property type="term" value="C:perinuclear region of cytoplasm"/>
    <property type="evidence" value="ECO:0000250"/>
    <property type="project" value="UniProtKB"/>
</dbReference>
<dbReference type="GO" id="GO:0005886">
    <property type="term" value="C:plasma membrane"/>
    <property type="evidence" value="ECO:0000250"/>
    <property type="project" value="UniProtKB"/>
</dbReference>
<dbReference type="GO" id="GO:0000151">
    <property type="term" value="C:ubiquitin ligase complex"/>
    <property type="evidence" value="ECO:0000318"/>
    <property type="project" value="GO_Central"/>
</dbReference>
<dbReference type="GO" id="GO:0097602">
    <property type="term" value="F:cullin family protein binding"/>
    <property type="evidence" value="ECO:0000250"/>
    <property type="project" value="UniProtKB"/>
</dbReference>
<dbReference type="GO" id="GO:0031624">
    <property type="term" value="F:ubiquitin conjugating enzyme binding"/>
    <property type="evidence" value="ECO:0000318"/>
    <property type="project" value="GO_Central"/>
</dbReference>
<dbReference type="GO" id="GO:0032182">
    <property type="term" value="F:ubiquitin-like protein binding"/>
    <property type="evidence" value="ECO:0000318"/>
    <property type="project" value="GO_Central"/>
</dbReference>
<dbReference type="GO" id="GO:0030308">
    <property type="term" value="P:negative regulation of cell growth"/>
    <property type="evidence" value="ECO:0000250"/>
    <property type="project" value="UniProtKB"/>
</dbReference>
<dbReference type="GO" id="GO:2000134">
    <property type="term" value="P:negative regulation of G1/S transition of mitotic cell cycle"/>
    <property type="evidence" value="ECO:0000250"/>
    <property type="project" value="UniProtKB"/>
</dbReference>
<dbReference type="GO" id="GO:2000435">
    <property type="term" value="P:negative regulation of protein neddylation"/>
    <property type="evidence" value="ECO:0000250"/>
    <property type="project" value="UniProtKB"/>
</dbReference>
<dbReference type="GO" id="GO:0043065">
    <property type="term" value="P:positive regulation of apoptotic process"/>
    <property type="evidence" value="ECO:0000250"/>
    <property type="project" value="UniProtKB"/>
</dbReference>
<dbReference type="GO" id="GO:2000436">
    <property type="term" value="P:positive regulation of protein neddylation"/>
    <property type="evidence" value="ECO:0000250"/>
    <property type="project" value="UniProtKB"/>
</dbReference>
<dbReference type="GO" id="GO:0045116">
    <property type="term" value="P:protein neddylation"/>
    <property type="evidence" value="ECO:0000318"/>
    <property type="project" value="GO_Central"/>
</dbReference>
<dbReference type="GO" id="GO:0010564">
    <property type="term" value="P:regulation of cell cycle process"/>
    <property type="evidence" value="ECO:0000250"/>
    <property type="project" value="UniProtKB"/>
</dbReference>
<dbReference type="GO" id="GO:2000434">
    <property type="term" value="P:regulation of protein neddylation"/>
    <property type="evidence" value="ECO:0000250"/>
    <property type="project" value="UniProtKB"/>
</dbReference>
<dbReference type="GO" id="GO:0010332">
    <property type="term" value="P:response to gamma radiation"/>
    <property type="evidence" value="ECO:0000250"/>
    <property type="project" value="UniProtKB"/>
</dbReference>
<dbReference type="GO" id="GO:0010225">
    <property type="term" value="P:response to UV-C"/>
    <property type="evidence" value="ECO:0000250"/>
    <property type="project" value="UniProtKB"/>
</dbReference>
<dbReference type="FunFam" id="1.10.238.10:FF:000126">
    <property type="entry name" value="DCN1-like protein"/>
    <property type="match status" value="1"/>
</dbReference>
<dbReference type="FunFam" id="1.10.238.200:FF:000003">
    <property type="entry name" value="DCN1-like protein 3"/>
    <property type="match status" value="1"/>
</dbReference>
<dbReference type="Gene3D" id="1.10.238.200">
    <property type="entry name" value="Cullin, PONY binding domain"/>
    <property type="match status" value="1"/>
</dbReference>
<dbReference type="Gene3D" id="1.10.238.10">
    <property type="entry name" value="EF-hand"/>
    <property type="match status" value="1"/>
</dbReference>
<dbReference type="InterPro" id="IPR014764">
    <property type="entry name" value="DCN-prot"/>
</dbReference>
<dbReference type="InterPro" id="IPR042460">
    <property type="entry name" value="DCN1-like_PONY"/>
</dbReference>
<dbReference type="InterPro" id="IPR005176">
    <property type="entry name" value="PONY_dom"/>
</dbReference>
<dbReference type="PANTHER" id="PTHR12281:SF31">
    <property type="entry name" value="DCN1-LIKE PROTEIN 3"/>
    <property type="match status" value="1"/>
</dbReference>
<dbReference type="PANTHER" id="PTHR12281">
    <property type="entry name" value="RP42 RELATED"/>
    <property type="match status" value="1"/>
</dbReference>
<dbReference type="Pfam" id="PF03556">
    <property type="entry name" value="Cullin_binding"/>
    <property type="match status" value="1"/>
</dbReference>
<dbReference type="PROSITE" id="PS51229">
    <property type="entry name" value="DCUN1"/>
    <property type="match status" value="1"/>
</dbReference>